<sequence>MSTIEERVKKIIVEQLGVKEDEVVNSASFVDDLGADSLDTVELVMALEEEFDTEIPDEEAEKITTVQAAIDYIEAANK</sequence>
<feature type="chain" id="PRO_1000213908" description="Acyl carrier protein">
    <location>
        <begin position="1"/>
        <end position="78"/>
    </location>
</feature>
<feature type="domain" description="Carrier" evidence="2">
    <location>
        <begin position="2"/>
        <end position="77"/>
    </location>
</feature>
<feature type="modified residue" description="O-(pantetheine 4'-phosphoryl)serine" evidence="2">
    <location>
        <position position="37"/>
    </location>
</feature>
<protein>
    <recommendedName>
        <fullName evidence="1">Acyl carrier protein</fullName>
        <shortName evidence="1">ACP</shortName>
    </recommendedName>
</protein>
<organism>
    <name type="scientific">Edwardsiella ictaluri (strain 93-146)</name>
    <dbReference type="NCBI Taxonomy" id="634503"/>
    <lineage>
        <taxon>Bacteria</taxon>
        <taxon>Pseudomonadati</taxon>
        <taxon>Pseudomonadota</taxon>
        <taxon>Gammaproteobacteria</taxon>
        <taxon>Enterobacterales</taxon>
        <taxon>Hafniaceae</taxon>
        <taxon>Edwardsiella</taxon>
    </lineage>
</organism>
<comment type="function">
    <text evidence="1">Carrier of the growing fatty acid chain in fatty acid biosynthesis.</text>
</comment>
<comment type="pathway">
    <text evidence="1">Lipid metabolism; fatty acid biosynthesis.</text>
</comment>
<comment type="subcellular location">
    <subcellularLocation>
        <location evidence="1">Cytoplasm</location>
    </subcellularLocation>
</comment>
<comment type="PTM">
    <text evidence="1">4'-phosphopantetheine is transferred from CoA to a specific serine of apo-ACP by AcpS. This modification is essential for activity because fatty acids are bound in thioester linkage to the sulfhydryl of the prosthetic group.</text>
</comment>
<comment type="similarity">
    <text evidence="1">Belongs to the acyl carrier protein (ACP) family.</text>
</comment>
<keyword id="KW-0963">Cytoplasm</keyword>
<keyword id="KW-0275">Fatty acid biosynthesis</keyword>
<keyword id="KW-0276">Fatty acid metabolism</keyword>
<keyword id="KW-0444">Lipid biosynthesis</keyword>
<keyword id="KW-0443">Lipid metabolism</keyword>
<keyword id="KW-0596">Phosphopantetheine</keyword>
<keyword id="KW-0597">Phosphoprotein</keyword>
<name>ACP_EDWI9</name>
<evidence type="ECO:0000255" key="1">
    <source>
        <dbReference type="HAMAP-Rule" id="MF_01217"/>
    </source>
</evidence>
<evidence type="ECO:0000255" key="2">
    <source>
        <dbReference type="PROSITE-ProRule" id="PRU00258"/>
    </source>
</evidence>
<dbReference type="EMBL" id="CP001600">
    <property type="protein sequence ID" value="ACR69539.1"/>
    <property type="molecule type" value="Genomic_DNA"/>
</dbReference>
<dbReference type="RefSeq" id="WP_005293837.1">
    <property type="nucleotide sequence ID" value="NZ_CP169062.1"/>
</dbReference>
<dbReference type="SMR" id="C5B8G9"/>
<dbReference type="STRING" id="67780.B6E78_04060"/>
<dbReference type="GeneID" id="93124477"/>
<dbReference type="KEGG" id="eic:NT01EI_2368"/>
<dbReference type="HOGENOM" id="CLU_108696_5_1_6"/>
<dbReference type="OrthoDB" id="9804551at2"/>
<dbReference type="UniPathway" id="UPA00094"/>
<dbReference type="Proteomes" id="UP000001485">
    <property type="component" value="Chromosome"/>
</dbReference>
<dbReference type="GO" id="GO:0005829">
    <property type="term" value="C:cytosol"/>
    <property type="evidence" value="ECO:0007669"/>
    <property type="project" value="TreeGrafter"/>
</dbReference>
<dbReference type="GO" id="GO:0016020">
    <property type="term" value="C:membrane"/>
    <property type="evidence" value="ECO:0007669"/>
    <property type="project" value="GOC"/>
</dbReference>
<dbReference type="GO" id="GO:0000035">
    <property type="term" value="F:acyl binding"/>
    <property type="evidence" value="ECO:0007669"/>
    <property type="project" value="TreeGrafter"/>
</dbReference>
<dbReference type="GO" id="GO:0000036">
    <property type="term" value="F:acyl carrier activity"/>
    <property type="evidence" value="ECO:0007669"/>
    <property type="project" value="UniProtKB-UniRule"/>
</dbReference>
<dbReference type="GO" id="GO:0009245">
    <property type="term" value="P:lipid A biosynthetic process"/>
    <property type="evidence" value="ECO:0007669"/>
    <property type="project" value="TreeGrafter"/>
</dbReference>
<dbReference type="FunFam" id="1.10.1200.10:FF:000001">
    <property type="entry name" value="Acyl carrier protein"/>
    <property type="match status" value="1"/>
</dbReference>
<dbReference type="Gene3D" id="1.10.1200.10">
    <property type="entry name" value="ACP-like"/>
    <property type="match status" value="1"/>
</dbReference>
<dbReference type="HAMAP" id="MF_01217">
    <property type="entry name" value="Acyl_carrier"/>
    <property type="match status" value="1"/>
</dbReference>
<dbReference type="InterPro" id="IPR003231">
    <property type="entry name" value="ACP"/>
</dbReference>
<dbReference type="InterPro" id="IPR036736">
    <property type="entry name" value="ACP-like_sf"/>
</dbReference>
<dbReference type="InterPro" id="IPR009081">
    <property type="entry name" value="PP-bd_ACP"/>
</dbReference>
<dbReference type="InterPro" id="IPR006162">
    <property type="entry name" value="Ppantetheine_attach_site"/>
</dbReference>
<dbReference type="NCBIfam" id="TIGR00517">
    <property type="entry name" value="acyl_carrier"/>
    <property type="match status" value="1"/>
</dbReference>
<dbReference type="NCBIfam" id="NF002148">
    <property type="entry name" value="PRK00982.1-2"/>
    <property type="match status" value="1"/>
</dbReference>
<dbReference type="NCBIfam" id="NF002149">
    <property type="entry name" value="PRK00982.1-3"/>
    <property type="match status" value="1"/>
</dbReference>
<dbReference type="NCBIfam" id="NF002150">
    <property type="entry name" value="PRK00982.1-4"/>
    <property type="match status" value="1"/>
</dbReference>
<dbReference type="NCBIfam" id="NF002151">
    <property type="entry name" value="PRK00982.1-5"/>
    <property type="match status" value="1"/>
</dbReference>
<dbReference type="PANTHER" id="PTHR20863">
    <property type="entry name" value="ACYL CARRIER PROTEIN"/>
    <property type="match status" value="1"/>
</dbReference>
<dbReference type="PANTHER" id="PTHR20863:SF76">
    <property type="entry name" value="CARRIER DOMAIN-CONTAINING PROTEIN"/>
    <property type="match status" value="1"/>
</dbReference>
<dbReference type="Pfam" id="PF00550">
    <property type="entry name" value="PP-binding"/>
    <property type="match status" value="1"/>
</dbReference>
<dbReference type="SUPFAM" id="SSF47336">
    <property type="entry name" value="ACP-like"/>
    <property type="match status" value="1"/>
</dbReference>
<dbReference type="PROSITE" id="PS50075">
    <property type="entry name" value="CARRIER"/>
    <property type="match status" value="1"/>
</dbReference>
<dbReference type="PROSITE" id="PS00012">
    <property type="entry name" value="PHOSPHOPANTETHEINE"/>
    <property type="match status" value="1"/>
</dbReference>
<accession>C5B8G9</accession>
<reference key="1">
    <citation type="submission" date="2009-03" db="EMBL/GenBank/DDBJ databases">
        <title>Complete genome sequence of Edwardsiella ictaluri 93-146.</title>
        <authorList>
            <person name="Williams M.L."/>
            <person name="Gillaspy A.F."/>
            <person name="Dyer D.W."/>
            <person name="Thune R.L."/>
            <person name="Waldbieser G.C."/>
            <person name="Schuster S.C."/>
            <person name="Gipson J."/>
            <person name="Zaitshik J."/>
            <person name="Landry C."/>
            <person name="Lawrence M.L."/>
        </authorList>
    </citation>
    <scope>NUCLEOTIDE SEQUENCE [LARGE SCALE GENOMIC DNA]</scope>
    <source>
        <strain>93-146</strain>
    </source>
</reference>
<proteinExistence type="inferred from homology"/>
<gene>
    <name evidence="1" type="primary">acpP</name>
    <name type="ordered locus">NT01EI_2368</name>
</gene>